<organism>
    <name type="scientific">Streptococcus thermophilus (strain ATCC BAA-491 / LMD-9)</name>
    <dbReference type="NCBI Taxonomy" id="322159"/>
    <lineage>
        <taxon>Bacteria</taxon>
        <taxon>Bacillati</taxon>
        <taxon>Bacillota</taxon>
        <taxon>Bacilli</taxon>
        <taxon>Lactobacillales</taxon>
        <taxon>Streptococcaceae</taxon>
        <taxon>Streptococcus</taxon>
    </lineage>
</organism>
<name>DPO4_STRTD</name>
<dbReference type="EC" id="2.7.7.7" evidence="1"/>
<dbReference type="EMBL" id="CP000419">
    <property type="protein sequence ID" value="ABJ66768.1"/>
    <property type="molecule type" value="Genomic_DNA"/>
</dbReference>
<dbReference type="RefSeq" id="WP_011681554.1">
    <property type="nucleotide sequence ID" value="NC_008532.1"/>
</dbReference>
<dbReference type="SMR" id="Q03J54"/>
<dbReference type="KEGG" id="ste:STER_1621"/>
<dbReference type="HOGENOM" id="CLU_012348_1_2_9"/>
<dbReference type="GO" id="GO:0005829">
    <property type="term" value="C:cytosol"/>
    <property type="evidence" value="ECO:0007669"/>
    <property type="project" value="TreeGrafter"/>
</dbReference>
<dbReference type="GO" id="GO:0003684">
    <property type="term" value="F:damaged DNA binding"/>
    <property type="evidence" value="ECO:0007669"/>
    <property type="project" value="InterPro"/>
</dbReference>
<dbReference type="GO" id="GO:0003887">
    <property type="term" value="F:DNA-directed DNA polymerase activity"/>
    <property type="evidence" value="ECO:0007669"/>
    <property type="project" value="UniProtKB-UniRule"/>
</dbReference>
<dbReference type="GO" id="GO:0000287">
    <property type="term" value="F:magnesium ion binding"/>
    <property type="evidence" value="ECO:0007669"/>
    <property type="project" value="UniProtKB-UniRule"/>
</dbReference>
<dbReference type="GO" id="GO:0006261">
    <property type="term" value="P:DNA-templated DNA replication"/>
    <property type="evidence" value="ECO:0007669"/>
    <property type="project" value="UniProtKB-UniRule"/>
</dbReference>
<dbReference type="GO" id="GO:0042276">
    <property type="term" value="P:error-prone translesion synthesis"/>
    <property type="evidence" value="ECO:0007669"/>
    <property type="project" value="TreeGrafter"/>
</dbReference>
<dbReference type="GO" id="GO:0009432">
    <property type="term" value="P:SOS response"/>
    <property type="evidence" value="ECO:0007669"/>
    <property type="project" value="TreeGrafter"/>
</dbReference>
<dbReference type="CDD" id="cd03586">
    <property type="entry name" value="PolY_Pol_IV_kappa"/>
    <property type="match status" value="1"/>
</dbReference>
<dbReference type="FunFam" id="3.30.1490.100:FF:000004">
    <property type="entry name" value="DNA polymerase IV"/>
    <property type="match status" value="1"/>
</dbReference>
<dbReference type="FunFam" id="3.40.1170.60:FF:000001">
    <property type="entry name" value="DNA polymerase IV"/>
    <property type="match status" value="1"/>
</dbReference>
<dbReference type="Gene3D" id="3.30.70.270">
    <property type="match status" value="1"/>
</dbReference>
<dbReference type="Gene3D" id="3.40.1170.60">
    <property type="match status" value="1"/>
</dbReference>
<dbReference type="Gene3D" id="1.10.150.20">
    <property type="entry name" value="5' to 3' exonuclease, C-terminal subdomain"/>
    <property type="match status" value="1"/>
</dbReference>
<dbReference type="Gene3D" id="3.30.1490.100">
    <property type="entry name" value="DNA polymerase, Y-family, little finger domain"/>
    <property type="match status" value="1"/>
</dbReference>
<dbReference type="HAMAP" id="MF_01113">
    <property type="entry name" value="DNApol_IV"/>
    <property type="match status" value="1"/>
</dbReference>
<dbReference type="InterPro" id="IPR043502">
    <property type="entry name" value="DNA/RNA_pol_sf"/>
</dbReference>
<dbReference type="InterPro" id="IPR036775">
    <property type="entry name" value="DNA_pol_Y-fam_lit_finger_sf"/>
</dbReference>
<dbReference type="InterPro" id="IPR017961">
    <property type="entry name" value="DNA_pol_Y-fam_little_finger"/>
</dbReference>
<dbReference type="InterPro" id="IPR050116">
    <property type="entry name" value="DNA_polymerase-Y"/>
</dbReference>
<dbReference type="InterPro" id="IPR022880">
    <property type="entry name" value="DNApol_IV"/>
</dbReference>
<dbReference type="InterPro" id="IPR024728">
    <property type="entry name" value="PolY_HhH_motif"/>
</dbReference>
<dbReference type="InterPro" id="IPR043128">
    <property type="entry name" value="Rev_trsase/Diguanyl_cyclase"/>
</dbReference>
<dbReference type="InterPro" id="IPR001126">
    <property type="entry name" value="UmuC"/>
</dbReference>
<dbReference type="NCBIfam" id="NF002677">
    <property type="entry name" value="PRK02406.1"/>
    <property type="match status" value="1"/>
</dbReference>
<dbReference type="PANTHER" id="PTHR11076:SF33">
    <property type="entry name" value="DNA POLYMERASE KAPPA"/>
    <property type="match status" value="1"/>
</dbReference>
<dbReference type="PANTHER" id="PTHR11076">
    <property type="entry name" value="DNA REPAIR POLYMERASE UMUC / TRANSFERASE FAMILY MEMBER"/>
    <property type="match status" value="1"/>
</dbReference>
<dbReference type="Pfam" id="PF00817">
    <property type="entry name" value="IMS"/>
    <property type="match status" value="1"/>
</dbReference>
<dbReference type="Pfam" id="PF11799">
    <property type="entry name" value="IMS_C"/>
    <property type="match status" value="1"/>
</dbReference>
<dbReference type="Pfam" id="PF11798">
    <property type="entry name" value="IMS_HHH"/>
    <property type="match status" value="1"/>
</dbReference>
<dbReference type="SUPFAM" id="SSF56672">
    <property type="entry name" value="DNA/RNA polymerases"/>
    <property type="match status" value="1"/>
</dbReference>
<dbReference type="SUPFAM" id="SSF100879">
    <property type="entry name" value="Lesion bypass DNA polymerase (Y-family), little finger domain"/>
    <property type="match status" value="1"/>
</dbReference>
<dbReference type="PROSITE" id="PS50173">
    <property type="entry name" value="UMUC"/>
    <property type="match status" value="1"/>
</dbReference>
<accession>Q03J54</accession>
<feature type="chain" id="PRO_1000084964" description="DNA polymerase IV">
    <location>
        <begin position="1"/>
        <end position="367"/>
    </location>
</feature>
<feature type="domain" description="UmuC" evidence="1">
    <location>
        <begin position="14"/>
        <end position="198"/>
    </location>
</feature>
<feature type="active site" evidence="1">
    <location>
        <position position="117"/>
    </location>
</feature>
<feature type="binding site" evidence="1">
    <location>
        <position position="18"/>
    </location>
    <ligand>
        <name>Mg(2+)</name>
        <dbReference type="ChEBI" id="CHEBI:18420"/>
    </ligand>
</feature>
<feature type="binding site" evidence="1">
    <location>
        <position position="116"/>
    </location>
    <ligand>
        <name>Mg(2+)</name>
        <dbReference type="ChEBI" id="CHEBI:18420"/>
    </ligand>
</feature>
<feature type="site" description="Substrate discrimination" evidence="1">
    <location>
        <position position="23"/>
    </location>
</feature>
<keyword id="KW-0963">Cytoplasm</keyword>
<keyword id="KW-0227">DNA damage</keyword>
<keyword id="KW-0234">DNA repair</keyword>
<keyword id="KW-0235">DNA replication</keyword>
<keyword id="KW-0238">DNA-binding</keyword>
<keyword id="KW-0239">DNA-directed DNA polymerase</keyword>
<keyword id="KW-0460">Magnesium</keyword>
<keyword id="KW-0479">Metal-binding</keyword>
<keyword id="KW-0515">Mutator protein</keyword>
<keyword id="KW-0548">Nucleotidyltransferase</keyword>
<keyword id="KW-0808">Transferase</keyword>
<evidence type="ECO:0000255" key="1">
    <source>
        <dbReference type="HAMAP-Rule" id="MF_01113"/>
    </source>
</evidence>
<reference key="1">
    <citation type="journal article" date="2006" name="Proc. Natl. Acad. Sci. U.S.A.">
        <title>Comparative genomics of the lactic acid bacteria.</title>
        <authorList>
            <person name="Makarova K.S."/>
            <person name="Slesarev A."/>
            <person name="Wolf Y.I."/>
            <person name="Sorokin A."/>
            <person name="Mirkin B."/>
            <person name="Koonin E.V."/>
            <person name="Pavlov A."/>
            <person name="Pavlova N."/>
            <person name="Karamychev V."/>
            <person name="Polouchine N."/>
            <person name="Shakhova V."/>
            <person name="Grigoriev I."/>
            <person name="Lou Y."/>
            <person name="Rohksar D."/>
            <person name="Lucas S."/>
            <person name="Huang K."/>
            <person name="Goodstein D.M."/>
            <person name="Hawkins T."/>
            <person name="Plengvidhya V."/>
            <person name="Welker D."/>
            <person name="Hughes J."/>
            <person name="Goh Y."/>
            <person name="Benson A."/>
            <person name="Baldwin K."/>
            <person name="Lee J.-H."/>
            <person name="Diaz-Muniz I."/>
            <person name="Dosti B."/>
            <person name="Smeianov V."/>
            <person name="Wechter W."/>
            <person name="Barabote R."/>
            <person name="Lorca G."/>
            <person name="Altermann E."/>
            <person name="Barrangou R."/>
            <person name="Ganesan B."/>
            <person name="Xie Y."/>
            <person name="Rawsthorne H."/>
            <person name="Tamir D."/>
            <person name="Parker C."/>
            <person name="Breidt F."/>
            <person name="Broadbent J.R."/>
            <person name="Hutkins R."/>
            <person name="O'Sullivan D."/>
            <person name="Steele J."/>
            <person name="Unlu G."/>
            <person name="Saier M.H. Jr."/>
            <person name="Klaenhammer T."/>
            <person name="Richardson P."/>
            <person name="Kozyavkin S."/>
            <person name="Weimer B.C."/>
            <person name="Mills D.A."/>
        </authorList>
    </citation>
    <scope>NUCLEOTIDE SEQUENCE [LARGE SCALE GENOMIC DNA]</scope>
    <source>
        <strain>ATCC BAA-491 / LMD-9</strain>
    </source>
</reference>
<gene>
    <name evidence="1" type="primary">dinB</name>
    <name type="ordered locus">STER_1621</name>
</gene>
<proteinExistence type="inferred from homology"/>
<protein>
    <recommendedName>
        <fullName evidence="1">DNA polymerase IV</fullName>
        <shortName evidence="1">Pol IV</shortName>
        <ecNumber evidence="1">2.7.7.7</ecNumber>
    </recommendedName>
</protein>
<sequence>MLEFPLINDTSRKIIHIDMDAFFAQVEMRDDPSLKDKPVIIGNDPRKTGGRGVVSTCNYEAKKYGVHSAMSSKEAYERCPNAVFISGNYSHYREVGMQIREIFKCYTDLVEPMSIDEAYLDVTTNKLGIKSAVKVAKLIQYDIWQELHLTCSAGVSYNKFIAKLASDFQKPAGLTVVLPEEAQEFLKKLPIAKFHGVGKKSVERLHDMDIYTGADLLKISEITLIDRFGRFGFDLFRKARGISNSPVKPNRVRKSIGSERTYGKLLYNEDDIKAELTKNAKRVAESAQKAKKVGRIIVIKVRYSDFSTLTKRMTLDKSTQDFDTIDRISHSIFDQLEENSSGVRLLGVTLTGLEDQEGRQLDLDDLA</sequence>
<comment type="function">
    <text evidence="1">Poorly processive, error-prone DNA polymerase involved in untargeted mutagenesis. Copies undamaged DNA at stalled replication forks, which arise in vivo from mismatched or misaligned primer ends. These misaligned primers can be extended by PolIV. Exhibits no 3'-5' exonuclease (proofreading) activity. May be involved in translesional synthesis, in conjunction with the beta clamp from PolIII.</text>
</comment>
<comment type="catalytic activity">
    <reaction evidence="1">
        <text>DNA(n) + a 2'-deoxyribonucleoside 5'-triphosphate = DNA(n+1) + diphosphate</text>
        <dbReference type="Rhea" id="RHEA:22508"/>
        <dbReference type="Rhea" id="RHEA-COMP:17339"/>
        <dbReference type="Rhea" id="RHEA-COMP:17340"/>
        <dbReference type="ChEBI" id="CHEBI:33019"/>
        <dbReference type="ChEBI" id="CHEBI:61560"/>
        <dbReference type="ChEBI" id="CHEBI:173112"/>
        <dbReference type="EC" id="2.7.7.7"/>
    </reaction>
</comment>
<comment type="cofactor">
    <cofactor evidence="1">
        <name>Mg(2+)</name>
        <dbReference type="ChEBI" id="CHEBI:18420"/>
    </cofactor>
    <text evidence="1">Binds 2 magnesium ions per subunit.</text>
</comment>
<comment type="subunit">
    <text evidence="1">Monomer.</text>
</comment>
<comment type="subcellular location">
    <subcellularLocation>
        <location evidence="1">Cytoplasm</location>
    </subcellularLocation>
</comment>
<comment type="similarity">
    <text evidence="1">Belongs to the DNA polymerase type-Y family.</text>
</comment>